<evidence type="ECO:0000255" key="1">
    <source>
        <dbReference type="HAMAP-Rule" id="MF_00115"/>
    </source>
</evidence>
<comment type="function">
    <text evidence="1">Channel that opens in response to stretch forces in the membrane lipid bilayer. May participate in the regulation of osmotic pressure changes within the cell.</text>
</comment>
<comment type="subunit">
    <text evidence="1">Homopentamer.</text>
</comment>
<comment type="subcellular location">
    <subcellularLocation>
        <location evidence="1">Cell inner membrane</location>
        <topology evidence="1">Multi-pass membrane protein</topology>
    </subcellularLocation>
</comment>
<comment type="similarity">
    <text evidence="1">Belongs to the MscL family.</text>
</comment>
<keyword id="KW-0997">Cell inner membrane</keyword>
<keyword id="KW-1003">Cell membrane</keyword>
<keyword id="KW-0407">Ion channel</keyword>
<keyword id="KW-0406">Ion transport</keyword>
<keyword id="KW-0472">Membrane</keyword>
<keyword id="KW-0812">Transmembrane</keyword>
<keyword id="KW-1133">Transmembrane helix</keyword>
<keyword id="KW-0813">Transport</keyword>
<feature type="chain" id="PRO_0000237966" description="Large-conductance mechanosensitive channel">
    <location>
        <begin position="1"/>
        <end position="146"/>
    </location>
</feature>
<feature type="transmembrane region" description="Helical" evidence="1">
    <location>
        <begin position="17"/>
        <end position="37"/>
    </location>
</feature>
<feature type="transmembrane region" description="Helical" evidence="1">
    <location>
        <begin position="40"/>
        <end position="60"/>
    </location>
</feature>
<feature type="transmembrane region" description="Helical" evidence="1">
    <location>
        <begin position="89"/>
        <end position="109"/>
    </location>
</feature>
<dbReference type="EMBL" id="CR543861">
    <property type="protein sequence ID" value="CAG67615.1"/>
    <property type="molecule type" value="Genomic_DNA"/>
</dbReference>
<dbReference type="RefSeq" id="WP_004922597.1">
    <property type="nucleotide sequence ID" value="NC_005966.1"/>
</dbReference>
<dbReference type="SMR" id="Q6FE93"/>
<dbReference type="STRING" id="202950.GCA_001485005_02465"/>
<dbReference type="GeneID" id="45233174"/>
<dbReference type="KEGG" id="aci:ACIAD0704"/>
<dbReference type="eggNOG" id="COG1970">
    <property type="taxonomic scope" value="Bacteria"/>
</dbReference>
<dbReference type="HOGENOM" id="CLU_095787_0_1_6"/>
<dbReference type="OrthoDB" id="9810350at2"/>
<dbReference type="BioCyc" id="ASP62977:ACIAD_RS03230-MONOMER"/>
<dbReference type="Proteomes" id="UP000000430">
    <property type="component" value="Chromosome"/>
</dbReference>
<dbReference type="GO" id="GO:0005886">
    <property type="term" value="C:plasma membrane"/>
    <property type="evidence" value="ECO:0007669"/>
    <property type="project" value="UniProtKB-SubCell"/>
</dbReference>
<dbReference type="GO" id="GO:0008381">
    <property type="term" value="F:mechanosensitive monoatomic ion channel activity"/>
    <property type="evidence" value="ECO:0007669"/>
    <property type="project" value="UniProtKB-UniRule"/>
</dbReference>
<dbReference type="Gene3D" id="1.10.1200.120">
    <property type="entry name" value="Large-conductance mechanosensitive channel, MscL, domain 1"/>
    <property type="match status" value="1"/>
</dbReference>
<dbReference type="HAMAP" id="MF_00115">
    <property type="entry name" value="MscL"/>
    <property type="match status" value="1"/>
</dbReference>
<dbReference type="InterPro" id="IPR019823">
    <property type="entry name" value="Mechanosensitive_channel_CS"/>
</dbReference>
<dbReference type="InterPro" id="IPR001185">
    <property type="entry name" value="MS_channel"/>
</dbReference>
<dbReference type="InterPro" id="IPR037673">
    <property type="entry name" value="MSC/AndL"/>
</dbReference>
<dbReference type="InterPro" id="IPR036019">
    <property type="entry name" value="MscL_channel"/>
</dbReference>
<dbReference type="NCBIfam" id="TIGR00220">
    <property type="entry name" value="mscL"/>
    <property type="match status" value="1"/>
</dbReference>
<dbReference type="NCBIfam" id="NF001843">
    <property type="entry name" value="PRK00567.1-4"/>
    <property type="match status" value="1"/>
</dbReference>
<dbReference type="NCBIfam" id="NF010557">
    <property type="entry name" value="PRK13952.1"/>
    <property type="match status" value="1"/>
</dbReference>
<dbReference type="PANTHER" id="PTHR30266:SF2">
    <property type="entry name" value="LARGE-CONDUCTANCE MECHANOSENSITIVE CHANNEL"/>
    <property type="match status" value="1"/>
</dbReference>
<dbReference type="PANTHER" id="PTHR30266">
    <property type="entry name" value="MECHANOSENSITIVE CHANNEL MSCL"/>
    <property type="match status" value="1"/>
</dbReference>
<dbReference type="Pfam" id="PF01741">
    <property type="entry name" value="MscL"/>
    <property type="match status" value="1"/>
</dbReference>
<dbReference type="PRINTS" id="PR01264">
    <property type="entry name" value="MECHCHANNEL"/>
</dbReference>
<dbReference type="SUPFAM" id="SSF81330">
    <property type="entry name" value="Gated mechanosensitive channel"/>
    <property type="match status" value="1"/>
</dbReference>
<dbReference type="PROSITE" id="PS01327">
    <property type="entry name" value="MSCL"/>
    <property type="match status" value="1"/>
</dbReference>
<sequence>MSIIQEFREFAVKGNMIDLAVGVIIGGAFGKIVDSLVKDIIMPLITVITGGGVDFTQKFVVLGNNPDNLQSLDALQKAGVNVLTYGNFLTILINFIILAWVVFLMVKLINRMRRKQEEAPAAPAPTPEDIALLREIRDELKNRPQV</sequence>
<accession>Q6FE93</accession>
<protein>
    <recommendedName>
        <fullName evidence="1">Large-conductance mechanosensitive channel</fullName>
    </recommendedName>
</protein>
<gene>
    <name evidence="1" type="primary">mscL</name>
    <name type="ordered locus">ACIAD0704</name>
</gene>
<reference key="1">
    <citation type="journal article" date="2004" name="Nucleic Acids Res.">
        <title>Unique features revealed by the genome sequence of Acinetobacter sp. ADP1, a versatile and naturally transformation competent bacterium.</title>
        <authorList>
            <person name="Barbe V."/>
            <person name="Vallenet D."/>
            <person name="Fonknechten N."/>
            <person name="Kreimeyer A."/>
            <person name="Oztas S."/>
            <person name="Labarre L."/>
            <person name="Cruveiller S."/>
            <person name="Robert C."/>
            <person name="Duprat S."/>
            <person name="Wincker P."/>
            <person name="Ornston L.N."/>
            <person name="Weissenbach J."/>
            <person name="Marliere P."/>
            <person name="Cohen G.N."/>
            <person name="Medigue C."/>
        </authorList>
    </citation>
    <scope>NUCLEOTIDE SEQUENCE [LARGE SCALE GENOMIC DNA]</scope>
    <source>
        <strain>ATCC 33305 / BD413 / ADP1</strain>
    </source>
</reference>
<name>MSCL_ACIAD</name>
<proteinExistence type="inferred from homology"/>
<organism>
    <name type="scientific">Acinetobacter baylyi (strain ATCC 33305 / BD413 / ADP1)</name>
    <dbReference type="NCBI Taxonomy" id="62977"/>
    <lineage>
        <taxon>Bacteria</taxon>
        <taxon>Pseudomonadati</taxon>
        <taxon>Pseudomonadota</taxon>
        <taxon>Gammaproteobacteria</taxon>
        <taxon>Moraxellales</taxon>
        <taxon>Moraxellaceae</taxon>
        <taxon>Acinetobacter</taxon>
    </lineage>
</organism>